<name>ACCD_METED</name>
<dbReference type="EC" id="2.1.3.15" evidence="1"/>
<dbReference type="EMBL" id="FP103042">
    <property type="protein sequence ID" value="CAX27089.1"/>
    <property type="molecule type" value="Genomic_DNA"/>
</dbReference>
<dbReference type="RefSeq" id="WP_003603557.1">
    <property type="nucleotide sequence ID" value="NC_012988.1"/>
</dbReference>
<dbReference type="SMR" id="C7CMU4"/>
<dbReference type="GeneID" id="72992179"/>
<dbReference type="KEGG" id="mdi:METDI5481"/>
<dbReference type="HOGENOM" id="CLU_015486_1_0_5"/>
<dbReference type="UniPathway" id="UPA00655">
    <property type="reaction ID" value="UER00711"/>
</dbReference>
<dbReference type="Proteomes" id="UP000008070">
    <property type="component" value="Chromosome"/>
</dbReference>
<dbReference type="GO" id="GO:0009329">
    <property type="term" value="C:acetate CoA-transferase complex"/>
    <property type="evidence" value="ECO:0007669"/>
    <property type="project" value="TreeGrafter"/>
</dbReference>
<dbReference type="GO" id="GO:0003989">
    <property type="term" value="F:acetyl-CoA carboxylase activity"/>
    <property type="evidence" value="ECO:0007669"/>
    <property type="project" value="InterPro"/>
</dbReference>
<dbReference type="GO" id="GO:0005524">
    <property type="term" value="F:ATP binding"/>
    <property type="evidence" value="ECO:0007669"/>
    <property type="project" value="UniProtKB-KW"/>
</dbReference>
<dbReference type="GO" id="GO:0016743">
    <property type="term" value="F:carboxyl- or carbamoyltransferase activity"/>
    <property type="evidence" value="ECO:0007669"/>
    <property type="project" value="UniProtKB-UniRule"/>
</dbReference>
<dbReference type="GO" id="GO:0006633">
    <property type="term" value="P:fatty acid biosynthetic process"/>
    <property type="evidence" value="ECO:0007669"/>
    <property type="project" value="UniProtKB-KW"/>
</dbReference>
<dbReference type="GO" id="GO:2001295">
    <property type="term" value="P:malonyl-CoA biosynthetic process"/>
    <property type="evidence" value="ECO:0007669"/>
    <property type="project" value="UniProtKB-UniRule"/>
</dbReference>
<dbReference type="Gene3D" id="3.90.226.10">
    <property type="entry name" value="2-enoyl-CoA Hydratase, Chain A, domain 1"/>
    <property type="match status" value="1"/>
</dbReference>
<dbReference type="HAMAP" id="MF_01395">
    <property type="entry name" value="AcetylCoA_CT_beta"/>
    <property type="match status" value="1"/>
</dbReference>
<dbReference type="InterPro" id="IPR034733">
    <property type="entry name" value="AcCoA_carboxyl_beta"/>
</dbReference>
<dbReference type="InterPro" id="IPR000438">
    <property type="entry name" value="Acetyl_CoA_COase_Trfase_b_su"/>
</dbReference>
<dbReference type="InterPro" id="IPR029045">
    <property type="entry name" value="ClpP/crotonase-like_dom_sf"/>
</dbReference>
<dbReference type="InterPro" id="IPR011762">
    <property type="entry name" value="COA_CT_N"/>
</dbReference>
<dbReference type="NCBIfam" id="TIGR00515">
    <property type="entry name" value="accD"/>
    <property type="match status" value="1"/>
</dbReference>
<dbReference type="PANTHER" id="PTHR42995">
    <property type="entry name" value="ACETYL-COENZYME A CARBOXYLASE CARBOXYL TRANSFERASE SUBUNIT BETA, CHLOROPLASTIC"/>
    <property type="match status" value="1"/>
</dbReference>
<dbReference type="PANTHER" id="PTHR42995:SF5">
    <property type="entry name" value="ACETYL-COENZYME A CARBOXYLASE CARBOXYL TRANSFERASE SUBUNIT BETA, CHLOROPLASTIC"/>
    <property type="match status" value="1"/>
</dbReference>
<dbReference type="Pfam" id="PF01039">
    <property type="entry name" value="Carboxyl_trans"/>
    <property type="match status" value="1"/>
</dbReference>
<dbReference type="PRINTS" id="PR01070">
    <property type="entry name" value="ACCCTRFRASEB"/>
</dbReference>
<dbReference type="SUPFAM" id="SSF52096">
    <property type="entry name" value="ClpP/crotonase"/>
    <property type="match status" value="1"/>
</dbReference>
<dbReference type="PROSITE" id="PS50980">
    <property type="entry name" value="COA_CT_NTER"/>
    <property type="match status" value="1"/>
</dbReference>
<keyword id="KW-0067">ATP-binding</keyword>
<keyword id="KW-0963">Cytoplasm</keyword>
<keyword id="KW-0275">Fatty acid biosynthesis</keyword>
<keyword id="KW-0276">Fatty acid metabolism</keyword>
<keyword id="KW-0444">Lipid biosynthesis</keyword>
<keyword id="KW-0443">Lipid metabolism</keyword>
<keyword id="KW-0547">Nucleotide-binding</keyword>
<keyword id="KW-0808">Transferase</keyword>
<organism>
    <name type="scientific">Methylorubrum extorquens (strain DSM 6343 / CIP 106787 / DM4)</name>
    <name type="common">Methylobacterium extorquens</name>
    <dbReference type="NCBI Taxonomy" id="661410"/>
    <lineage>
        <taxon>Bacteria</taxon>
        <taxon>Pseudomonadati</taxon>
        <taxon>Pseudomonadota</taxon>
        <taxon>Alphaproteobacteria</taxon>
        <taxon>Hyphomicrobiales</taxon>
        <taxon>Methylobacteriaceae</taxon>
        <taxon>Methylorubrum</taxon>
    </lineage>
</organism>
<protein>
    <recommendedName>
        <fullName evidence="1">Acetyl-coenzyme A carboxylase carboxyl transferase subunit beta</fullName>
        <shortName evidence="1">ACCase subunit beta</shortName>
        <shortName evidence="1">Acetyl-CoA carboxylase carboxyltransferase subunit beta</shortName>
        <ecNumber evidence="1">2.1.3.15</ecNumber>
    </recommendedName>
</protein>
<accession>C7CMU4</accession>
<proteinExistence type="inferred from homology"/>
<feature type="chain" id="PRO_0000389795" description="Acetyl-coenzyme A carboxylase carboxyl transferase subunit beta">
    <location>
        <begin position="1"/>
        <end position="307"/>
    </location>
</feature>
<feature type="domain" description="CoA carboxyltransferase N-terminal" evidence="2">
    <location>
        <begin position="28"/>
        <end position="297"/>
    </location>
</feature>
<feature type="region of interest" description="Disordered" evidence="3">
    <location>
        <begin position="286"/>
        <end position="307"/>
    </location>
</feature>
<feature type="compositionally biased region" description="Pro residues" evidence="3">
    <location>
        <begin position="292"/>
        <end position="307"/>
    </location>
</feature>
<comment type="function">
    <text evidence="1">Component of the acetyl coenzyme A carboxylase (ACC) complex. Biotin carboxylase (BC) catalyzes the carboxylation of biotin on its carrier protein (BCCP) and then the CO(2) group is transferred by the transcarboxylase to acetyl-CoA to form malonyl-CoA.</text>
</comment>
<comment type="catalytic activity">
    <reaction evidence="1">
        <text>N(6)-carboxybiotinyl-L-lysyl-[protein] + acetyl-CoA = N(6)-biotinyl-L-lysyl-[protein] + malonyl-CoA</text>
        <dbReference type="Rhea" id="RHEA:54728"/>
        <dbReference type="Rhea" id="RHEA-COMP:10505"/>
        <dbReference type="Rhea" id="RHEA-COMP:10506"/>
        <dbReference type="ChEBI" id="CHEBI:57288"/>
        <dbReference type="ChEBI" id="CHEBI:57384"/>
        <dbReference type="ChEBI" id="CHEBI:83144"/>
        <dbReference type="ChEBI" id="CHEBI:83145"/>
        <dbReference type="EC" id="2.1.3.15"/>
    </reaction>
</comment>
<comment type="pathway">
    <text evidence="1">Lipid metabolism; malonyl-CoA biosynthesis; malonyl-CoA from acetyl-CoA: step 1/1.</text>
</comment>
<comment type="subunit">
    <text evidence="1">Acetyl-CoA carboxylase is a heterohexamer composed of biotin carboxyl carrier protein (AccB), biotin carboxylase (AccC) and two subunits each of ACCase subunit alpha (AccA) and ACCase subunit beta (AccD).</text>
</comment>
<comment type="subcellular location">
    <subcellularLocation>
        <location evidence="1">Cytoplasm</location>
    </subcellularLocation>
</comment>
<comment type="similarity">
    <text evidence="1">Belongs to the AccD/PCCB family.</text>
</comment>
<evidence type="ECO:0000255" key="1">
    <source>
        <dbReference type="HAMAP-Rule" id="MF_01395"/>
    </source>
</evidence>
<evidence type="ECO:0000255" key="2">
    <source>
        <dbReference type="PROSITE-ProRule" id="PRU01136"/>
    </source>
</evidence>
<evidence type="ECO:0000256" key="3">
    <source>
        <dbReference type="SAM" id="MobiDB-lite"/>
    </source>
</evidence>
<sequence length="307" mass="34198">MVEPMNWISEVVRPRIKTLFKRETPENLWVKCPDTGQMVFHKEVEQNHWVIPGSEHHLKMSATARLKMMFDEGTWIDVPLPEVPADPLKFRDEKRYVDRLKEARAKTGMPDAFKIGFGRVGSLPMTIAAQEFGFMAGSLGMAGGEAFVRGAETALEKRTPYVLFAASGGARMQEGILSLMQMPRTTVAVRRLRAARLPYIVVLTNPTTGGVTASYAMLGDVHLAEPGALICFAGPRVIEQTIREKLPDGFQRAEYLREHGMVDQVVHRHQLKETISRLCGLLMDVRRTPEPGTAPEPTTPEPLPNAA</sequence>
<reference key="1">
    <citation type="journal article" date="2009" name="PLoS ONE">
        <title>Methylobacterium genome sequences: a reference blueprint to investigate microbial metabolism of C1 compounds from natural and industrial sources.</title>
        <authorList>
            <person name="Vuilleumier S."/>
            <person name="Chistoserdova L."/>
            <person name="Lee M.-C."/>
            <person name="Bringel F."/>
            <person name="Lajus A."/>
            <person name="Zhou Y."/>
            <person name="Gourion B."/>
            <person name="Barbe V."/>
            <person name="Chang J."/>
            <person name="Cruveiller S."/>
            <person name="Dossat C."/>
            <person name="Gillett W."/>
            <person name="Gruffaz C."/>
            <person name="Haugen E."/>
            <person name="Hourcade E."/>
            <person name="Levy R."/>
            <person name="Mangenot S."/>
            <person name="Muller E."/>
            <person name="Nadalig T."/>
            <person name="Pagni M."/>
            <person name="Penny C."/>
            <person name="Peyraud R."/>
            <person name="Robinson D.G."/>
            <person name="Roche D."/>
            <person name="Rouy Z."/>
            <person name="Saenampechek C."/>
            <person name="Salvignol G."/>
            <person name="Vallenet D."/>
            <person name="Wu Z."/>
            <person name="Marx C.J."/>
            <person name="Vorholt J.A."/>
            <person name="Olson M.V."/>
            <person name="Kaul R."/>
            <person name="Weissenbach J."/>
            <person name="Medigue C."/>
            <person name="Lidstrom M.E."/>
        </authorList>
    </citation>
    <scope>NUCLEOTIDE SEQUENCE [LARGE SCALE GENOMIC DNA]</scope>
    <source>
        <strain>DSM 6343 / CIP 106787 / DM4</strain>
    </source>
</reference>
<gene>
    <name evidence="1" type="primary">accD</name>
    <name type="ordered locus">METDI5481</name>
</gene>